<protein>
    <recommendedName>
        <fullName>Uncharacterized protein ORF8'</fullName>
    </recommendedName>
</protein>
<sequence length="361" mass="40565">MPVNPPPTAPADNLNLDKAIEFKFPQELGKPPLREGVAPKLLLGHLVVLPIYLSGGTPLGGHDGVQEDLLVVPQLLNTTPDKLNLNLISRHPHIRLTDNTLKLPYRNIRREAEEVKGIPGVPITLGRERRAQWHNIVFQDTVVKRHLNPVVQDLLKLRGAVRGETDPPWLKRGYNTRVADHVHDRKLVGKAYNAHIRLPGKVVEELIPVPGKGLIDLVHYDDHLSLRGPFPNLLHNVQEPKTSSGGPGNGRCDLVGGAVRNDVLNHRVTGVLLEFVDHILRRDGLPRSWGPYNQQVWWGGAVEDVPQVLADSTHLFLPVLQGVRYKQRAEDIPVFEKFRSLLKHLQLPAIQLYNSKPYFYM</sequence>
<name>YPZ8_METTF</name>
<accession>P29585</accession>
<reference key="1">
    <citation type="journal article" date="1992" name="Nucleic Acids Res.">
        <title>Modular organization of related Archaeal plasmids encoding different restriction-modification systems in Methanobacterium thermoformicicum.</title>
        <authorList>
            <person name="Noelling J."/>
            <person name="van Eeden F.J.M."/>
            <person name="Eggen R.I.L."/>
            <person name="de Vos W.M."/>
        </authorList>
    </citation>
    <scope>NUCLEOTIDE SEQUENCE [GENOMIC DNA]</scope>
    <source>
        <strain>DSM 3720 / Z-245</strain>
    </source>
</reference>
<feature type="chain" id="PRO_0000066442" description="Uncharacterized protein ORF8'">
    <location>
        <begin position="1"/>
        <end position="361"/>
    </location>
</feature>
<organism>
    <name type="scientific">Methanothermobacter thermautotrophicus</name>
    <name type="common">Methanobacterium thermoformicicum</name>
    <dbReference type="NCBI Taxonomy" id="145262"/>
    <lineage>
        <taxon>Archaea</taxon>
        <taxon>Methanobacteriati</taxon>
        <taxon>Methanobacteriota</taxon>
        <taxon>Methanomada group</taxon>
        <taxon>Methanobacteria</taxon>
        <taxon>Methanobacteriales</taxon>
        <taxon>Methanobacteriaceae</taxon>
        <taxon>Methanothermobacter</taxon>
    </lineage>
</organism>
<keyword id="KW-0614">Plasmid</keyword>
<geneLocation type="plasmid">
    <name>pFZ1</name>
</geneLocation>
<proteinExistence type="predicted"/>
<dbReference type="EMBL" id="X68367">
    <property type="protein sequence ID" value="CAA48439.1"/>
    <property type="molecule type" value="Genomic_DNA"/>
</dbReference>
<dbReference type="PIR" id="S30325">
    <property type="entry name" value="S30325"/>
</dbReference>
<dbReference type="RefSeq" id="NP_039766.1">
    <property type="nucleotide sequence ID" value="NC_001337.1"/>
</dbReference>